<keyword id="KW-0027">Amidation</keyword>
<keyword id="KW-0903">Direct protein sequencing</keyword>
<keyword id="KW-1015">Disulfide bond</keyword>
<keyword id="KW-0872">Ion channel impairing toxin</keyword>
<keyword id="KW-0960">Knottin</keyword>
<keyword id="KW-0632">Potassium channel impairing toxin</keyword>
<keyword id="KW-0964">Secreted</keyword>
<keyword id="KW-0732">Signal</keyword>
<keyword id="KW-0800">Toxin</keyword>
<keyword id="KW-1220">Voltage-gated potassium channel impairing toxin</keyword>
<keyword id="KW-0738">Voltage-gated sodium channel impairing toxin</keyword>
<protein>
    <recommendedName>
        <fullName evidence="8">Kappa-theraphotoxin-Cg1a 4</fullName>
        <shortName evidence="8">Kappa-TRTX-Cg1a</shortName>
    </recommendedName>
    <alternativeName>
        <fullName>Jingzhaotoxin-11.4</fullName>
        <shortName>JZTX-11.4</shortName>
    </alternativeName>
    <alternativeName>
        <fullName evidence="5">Jingzhaotoxin-XI.4</fullName>
        <shortName evidence="5 7">JZTX-XI.4</shortName>
    </alternativeName>
    <alternativeName>
        <fullName evidence="6">Peptide F4-13.64</fullName>
    </alternativeName>
</protein>
<name>JZ11D_CHIGU</name>
<reference key="1">
    <citation type="journal article" date="2008" name="Cell. Mol. Life Sci.">
        <title>Molecular diversity and evolution of cystine knot toxins of the tarantula Chilobrachys jingzhao.</title>
        <authorList>
            <person name="Chen J."/>
            <person name="Deng M."/>
            <person name="He Q."/>
            <person name="Meng E."/>
            <person name="Jiang L."/>
            <person name="Liao Z."/>
            <person name="Rong M."/>
            <person name="Liang S."/>
        </authorList>
    </citation>
    <scope>NUCLEOTIDE SEQUENCE [LARGE SCALE MRNA]</scope>
    <source>
        <tissue>Venom gland</tissue>
    </source>
</reference>
<reference key="2">
    <citation type="journal article" date="2007" name="Proteomics">
        <title>Proteomic and peptidomic analysis of the venom from Chinese tarantula Chilobrachys jingzhao.</title>
        <authorList>
            <person name="Liao Z."/>
            <person name="Cao J."/>
            <person name="Li S."/>
            <person name="Yan X."/>
            <person name="Hu W."/>
            <person name="He Q."/>
            <person name="Chen J."/>
            <person name="Tang J."/>
            <person name="Xie J."/>
            <person name="Liang S."/>
        </authorList>
    </citation>
    <scope>PROTEIN SEQUENCE OF 51-84</scope>
    <scope>SUBCELLULAR LOCATION</scope>
    <source>
        <tissue>Venom</tissue>
    </source>
</reference>
<reference key="3">
    <citation type="journal article" date="2006" name="Biochemistry">
        <title>Solution structure and functional characterization of Jingzhaotoxin-XI: a novel gating modifier of both potassium and sodium channels.</title>
        <authorList>
            <person name="Liao Z."/>
            <person name="Yuan C."/>
            <person name="Deng M."/>
            <person name="Li J."/>
            <person name="Chen J."/>
            <person name="Yang Y."/>
            <person name="Hu W."/>
            <person name="Liang S."/>
        </authorList>
    </citation>
    <scope>PROTEIN SEQUENCE OF 51-84</scope>
    <scope>SUBCELLULAR LOCATION</scope>
    <scope>FUNCTION</scope>
    <scope>STRUCTURE BY NMR OF 51-84</scope>
    <scope>AMIDATION AT PHE-84</scope>
    <scope>DISULFIDE BONDS</scope>
    <scope>MASS SPECTROMETRY</scope>
    <source>
        <tissue>Venom</tissue>
    </source>
</reference>
<reference key="4">
    <citation type="journal article" date="2014" name="Toxicon">
        <title>The tarantula toxin jingzhaotoxin-XI (kappa-theraphotoxin-Cj1a) regulates the activation and inactivation of the voltage-gated sodium channel Nav1.5.</title>
        <authorList>
            <person name="Tang C."/>
            <person name="Zhou X."/>
            <person name="Huang Y."/>
            <person name="Zhang Y."/>
            <person name="Hu Z."/>
            <person name="Wang M."/>
            <person name="Chen P."/>
            <person name="Liu Z."/>
            <person name="Liang S."/>
        </authorList>
    </citation>
    <scope>PROTEIN SEQUENCE OF 51-84</scope>
    <scope>FUNCTION</scope>
    <scope>DISULFIDE BOND</scope>
    <source>
        <tissue>Venom</tissue>
    </source>
</reference>
<comment type="function">
    <text evidence="2 4">This toxin acts as a voltage-dependent gating-modifier (PubMed:25240294). It inhibits the sodium conductance (IC(50)=124 nM) and slows the fast inactivation (EC(50)=1180 nM) of Nav1.5/SCN5A (PubMed:17176080, PubMed:25240294). It significantly shifts the activation to more depolarized voltages and decreases the deactivation of Nav1.5 currents upon extreme depolarization, but only slightly affects voltage-dependence of steady-state inactivation (PubMed:17176080, PubMed:25240294). In addition, this toxin causes an approximately five-fold decrease in the rate of recovery from inactivation and an approximately 1.9-fold reduction in the closed-state inactivation rate (PubMed:25240294). This toxin integrates the functions of site 3 toxins (alpha-scorpion toxins) with site 4 toxins (beta-scorpion and spider toxins) by targeting multiple sites on Nav1.5 (PubMed:25240294). Also shows inhibition of voltage-gated potassium channels (5 uM completely inhibits Kv2.1/KCNB1, whereas 5 uM moderately inhibits Kv4.2/KCND2 Kv4.1/KCND1 channels) (PubMed:17176080).</text>
</comment>
<comment type="subcellular location">
    <subcellularLocation>
        <location evidence="2 3">Secreted</location>
    </subcellularLocation>
</comment>
<comment type="tissue specificity">
    <text evidence="10 11">Expressed by the venom gland.</text>
</comment>
<comment type="domain">
    <text evidence="4">The presence of a 'disulfide through disulfide knot' structurally defines this protein as a knottin.</text>
</comment>
<comment type="mass spectrometry" mass="3727.3" method="MALDI" evidence="2">
    <text>Monoisotopic mass.</text>
</comment>
<comment type="miscellaneous">
    <text evidence="10">Negative results: does not show effect on Kv1.1/KCNA1, Kv1.2/KCNA2, Kv1.3/KCNA3, Kv1.4/KCNA4, Kv3.1/KCNC1 (all expressed in oocytes), voltage-gated sodium channels (Nav1) (from DRG neurons), and in a range of voltage-gated calcium channels (expressed in rat DRG neurons) (PubMed:17176080). In addition, does not show significant toxic symptoms when injected into mice and into cockroaches (PubMed:17176080).</text>
</comment>
<comment type="similarity">
    <text evidence="9">Belongs to the neurotoxin 10 (Hwtx-1) family. 28 (Jztx-11) subfamily.</text>
</comment>
<comment type="caution">
    <text evidence="9">Several genes are coding for this toxin for which the structure by NMR has been determined. The cross-references to PDB and additional information can be found in entry AC P0C247.</text>
</comment>
<dbReference type="EMBL" id="EU233873">
    <property type="protein sequence ID" value="ABY71692.1"/>
    <property type="molecule type" value="mRNA"/>
</dbReference>
<dbReference type="SMR" id="B1P1E2"/>
<dbReference type="ArachnoServer" id="AS000043">
    <property type="toxin name" value="kappa-theraphotoxin-Cg1a"/>
</dbReference>
<dbReference type="GO" id="GO:0005576">
    <property type="term" value="C:extracellular region"/>
    <property type="evidence" value="ECO:0007669"/>
    <property type="project" value="UniProtKB-SubCell"/>
</dbReference>
<dbReference type="GO" id="GO:0008200">
    <property type="term" value="F:ion channel inhibitor activity"/>
    <property type="evidence" value="ECO:0007669"/>
    <property type="project" value="InterPro"/>
</dbReference>
<dbReference type="GO" id="GO:0015459">
    <property type="term" value="F:potassium channel regulator activity"/>
    <property type="evidence" value="ECO:0007669"/>
    <property type="project" value="UniProtKB-KW"/>
</dbReference>
<dbReference type="GO" id="GO:0017080">
    <property type="term" value="F:sodium channel regulator activity"/>
    <property type="evidence" value="ECO:0007669"/>
    <property type="project" value="UniProtKB-KW"/>
</dbReference>
<dbReference type="GO" id="GO:0090729">
    <property type="term" value="F:toxin activity"/>
    <property type="evidence" value="ECO:0007669"/>
    <property type="project" value="UniProtKB-KW"/>
</dbReference>
<dbReference type="InterPro" id="IPR011696">
    <property type="entry name" value="Huwentoxin-1"/>
</dbReference>
<dbReference type="Pfam" id="PF07740">
    <property type="entry name" value="Toxin_12"/>
    <property type="match status" value="1"/>
</dbReference>
<dbReference type="SUPFAM" id="SSF57059">
    <property type="entry name" value="omega toxin-like"/>
    <property type="match status" value="1"/>
</dbReference>
<evidence type="ECO:0000255" key="1"/>
<evidence type="ECO:0000269" key="2">
    <source>
    </source>
</evidence>
<evidence type="ECO:0000269" key="3">
    <source>
    </source>
</evidence>
<evidence type="ECO:0000269" key="4">
    <source>
    </source>
</evidence>
<evidence type="ECO:0000303" key="5">
    <source>
    </source>
</evidence>
<evidence type="ECO:0000303" key="6">
    <source>
    </source>
</evidence>
<evidence type="ECO:0000303" key="7">
    <source>
    </source>
</evidence>
<evidence type="ECO:0000303" key="8">
    <source>
    </source>
</evidence>
<evidence type="ECO:0000305" key="9"/>
<evidence type="ECO:0000305" key="10">
    <source>
    </source>
</evidence>
<evidence type="ECO:0000305" key="11">
    <source>
    </source>
</evidence>
<proteinExistence type="evidence at protein level"/>
<sequence length="86" mass="9571">MKASVLITLAVLGVMFVWASAAELEERGSDQRDSPAWLKSMERIFQSEERECRKMFGGCSVDSDCCAHLGCKPTLKYCAWDGTFGK</sequence>
<organism>
    <name type="scientific">Chilobrachys guangxiensis</name>
    <name type="common">Chinese earth tiger tarantula</name>
    <name type="synonym">Chilobrachys jingzhao</name>
    <dbReference type="NCBI Taxonomy" id="278060"/>
    <lineage>
        <taxon>Eukaryota</taxon>
        <taxon>Metazoa</taxon>
        <taxon>Ecdysozoa</taxon>
        <taxon>Arthropoda</taxon>
        <taxon>Chelicerata</taxon>
        <taxon>Arachnida</taxon>
        <taxon>Araneae</taxon>
        <taxon>Mygalomorphae</taxon>
        <taxon>Theraphosidae</taxon>
        <taxon>Chilobrachys</taxon>
    </lineage>
</organism>
<feature type="signal peptide" evidence="1">
    <location>
        <begin position="1"/>
        <end position="21"/>
    </location>
</feature>
<feature type="propeptide" id="PRO_0000441863" evidence="2 3">
    <location>
        <begin position="22"/>
        <end position="50"/>
    </location>
</feature>
<feature type="chain" id="PRO_5002767315" description="Kappa-theraphotoxin-Cg1a 4" evidence="2 3 4">
    <location>
        <begin position="51"/>
        <end position="84"/>
    </location>
</feature>
<feature type="modified residue" description="Phenylalanine amide" evidence="2">
    <location>
        <position position="84"/>
    </location>
</feature>
<feature type="disulfide bond" evidence="2">
    <location>
        <begin position="52"/>
        <end position="66"/>
    </location>
</feature>
<feature type="disulfide bond" evidence="2">
    <location>
        <begin position="59"/>
        <end position="71"/>
    </location>
</feature>
<feature type="disulfide bond" evidence="2">
    <location>
        <begin position="65"/>
        <end position="78"/>
    </location>
</feature>
<accession>B1P1E2</accession>